<comment type="function">
    <text evidence="1">May serve to lubricate the movement of the cellulose microfibrils during cell growth and wall extension and/or may serve to maintain the fluid state of the slug cell wall (By similarity). Overexpression shows aberrant stalk formation.</text>
</comment>
<comment type="subcellular location">
    <subcellularLocation>
        <location evidence="6">Secreted</location>
    </subcellularLocation>
</comment>
<comment type="developmental stage">
    <text evidence="5">First detectable at the migrating slug stage. Observed throughout slug migration and culmination, and remains present in tip organizer cells.</text>
</comment>
<comment type="disruption phenotype">
    <text evidence="5">No phenotypic change.</text>
</comment>
<comment type="similarity">
    <text evidence="6">Belongs to the expansin family. Expansin A subfamily.</text>
</comment>
<accession>Q54J35</accession>
<gene>
    <name type="primary">expl7</name>
    <name type="ORF">DDB_G0288331</name>
</gene>
<sequence>MRLLGSLILTLSLIASAFSSSVPLTLCMSGRAQGTESLNKSGSCEYGAYNGPTGPGTLTATLNEYFYSSGVKCGDCFEVSGPKGKTVVRVVNFCSAGTCPSERPLFMLTPDAFQEISSDPLSVVYDAGFRKVSCDASGPIKAQVSEDSSKYYVKLLIFNNEVGIQSVTIKGKDMSAPVTMVRQGSAQFVWSQAGKEMMFPATVVVSSQYGGSVTMTMNSLSMDILKFSGNFVAPKSSIIKNAPASCSLSASPLAIYQNGLTEGWNYWSSRSYSQINTTDSSSHSVGSTKSLSLVLMGSSSALTLARSGDFETTYFTGIKFNMKANTTMSGLRVYFPNEQNKYWTPSSPITTSWATYTVPFTSLQHKTIESAFTFANTENINVHINIDNIHFIASPSSVTTGYANGNETANSGLATTTVASGGSGASGVATSSHTGVSSSSSTASSTASSTASSIASSTASSSASSTSVSSTTAGGKTTSGGSGISTSGITGSGDSMAASTSKTTSNPTGKTTGMTGSSIDHSESHSSDEHHSSSSIIKASLLLVSAALAFASL</sequence>
<keyword id="KW-1015">Disulfide bond</keyword>
<keyword id="KW-0325">Glycoprotein</keyword>
<keyword id="KW-1185">Reference proteome</keyword>
<keyword id="KW-0964">Secreted</keyword>
<keyword id="KW-0732">Signal</keyword>
<organism>
    <name type="scientific">Dictyostelium discoideum</name>
    <name type="common">Social amoeba</name>
    <dbReference type="NCBI Taxonomy" id="44689"/>
    <lineage>
        <taxon>Eukaryota</taxon>
        <taxon>Amoebozoa</taxon>
        <taxon>Evosea</taxon>
        <taxon>Eumycetozoa</taxon>
        <taxon>Dictyostelia</taxon>
        <taxon>Dictyosteliales</taxon>
        <taxon>Dictyosteliaceae</taxon>
        <taxon>Dictyostelium</taxon>
    </lineage>
</organism>
<feature type="signal peptide" evidence="2">
    <location>
        <begin position="1"/>
        <end position="19"/>
    </location>
</feature>
<feature type="chain" id="PRO_0000368220" description="Expansin-like protein 7">
    <location>
        <begin position="20"/>
        <end position="553"/>
    </location>
</feature>
<feature type="domain" description="Expansin-like EG45" evidence="3">
    <location>
        <begin position="41"/>
        <end position="139"/>
    </location>
</feature>
<feature type="region of interest" description="Disordered" evidence="4">
    <location>
        <begin position="421"/>
        <end position="447"/>
    </location>
</feature>
<feature type="region of interest" description="Disordered" evidence="4">
    <location>
        <begin position="460"/>
        <end position="531"/>
    </location>
</feature>
<feature type="compositionally biased region" description="Low complexity" evidence="4">
    <location>
        <begin position="460"/>
        <end position="476"/>
    </location>
</feature>
<feature type="compositionally biased region" description="Low complexity" evidence="4">
    <location>
        <begin position="484"/>
        <end position="493"/>
    </location>
</feature>
<feature type="compositionally biased region" description="Polar residues" evidence="4">
    <location>
        <begin position="497"/>
        <end position="516"/>
    </location>
</feature>
<feature type="compositionally biased region" description="Basic and acidic residues" evidence="4">
    <location>
        <begin position="520"/>
        <end position="531"/>
    </location>
</feature>
<feature type="glycosylation site" description="N-linked (GlcNAc...) asparagine" evidence="2">
    <location>
        <position position="39"/>
    </location>
</feature>
<feature type="glycosylation site" description="N-linked (GlcNAc...) asparagine" evidence="2">
    <location>
        <position position="276"/>
    </location>
</feature>
<feature type="glycosylation site" description="N-linked (GlcNAc...) asparagine" evidence="2">
    <location>
        <position position="325"/>
    </location>
</feature>
<feature type="glycosylation site" description="N-linked (GlcNAc...) asparagine" evidence="2">
    <location>
        <position position="406"/>
    </location>
</feature>
<feature type="disulfide bond" evidence="3">
    <location>
        <begin position="44"/>
        <end position="73"/>
    </location>
</feature>
<feature type="disulfide bond" evidence="3">
    <location>
        <begin position="76"/>
        <end position="134"/>
    </location>
</feature>
<proteinExistence type="evidence at transcript level"/>
<dbReference type="EMBL" id="AAFI02000111">
    <property type="protein sequence ID" value="EAL63262.1"/>
    <property type="molecule type" value="Genomic_DNA"/>
</dbReference>
<dbReference type="RefSeq" id="XP_636766.1">
    <property type="nucleotide sequence ID" value="XM_631674.1"/>
</dbReference>
<dbReference type="SMR" id="Q54J35"/>
<dbReference type="STRING" id="44689.Q54J35"/>
<dbReference type="GlyCosmos" id="Q54J35">
    <property type="glycosylation" value="4 sites, No reported glycans"/>
</dbReference>
<dbReference type="GlyGen" id="Q54J35">
    <property type="glycosylation" value="5 sites"/>
</dbReference>
<dbReference type="PaxDb" id="44689-DDB0229900"/>
<dbReference type="EnsemblProtists" id="EAL63262">
    <property type="protein sequence ID" value="EAL63262"/>
    <property type="gene ID" value="DDB_G0288331"/>
</dbReference>
<dbReference type="GeneID" id="8626569"/>
<dbReference type="KEGG" id="ddi:DDB_G0288331"/>
<dbReference type="dictyBase" id="DDB_G0288331">
    <property type="gene designation" value="expl7"/>
</dbReference>
<dbReference type="VEuPathDB" id="AmoebaDB:DDB_G0288331"/>
<dbReference type="eggNOG" id="ENOG502T0FC">
    <property type="taxonomic scope" value="Eukaryota"/>
</dbReference>
<dbReference type="HOGENOM" id="CLU_492985_0_0_1"/>
<dbReference type="InParanoid" id="Q54J35"/>
<dbReference type="OMA" id="KCGDCFE"/>
<dbReference type="PhylomeDB" id="Q54J35"/>
<dbReference type="PRO" id="PR:Q54J35"/>
<dbReference type="Proteomes" id="UP000002195">
    <property type="component" value="Chromosome 5"/>
</dbReference>
<dbReference type="GO" id="GO:0005576">
    <property type="term" value="C:extracellular region"/>
    <property type="evidence" value="ECO:0007669"/>
    <property type="project" value="UniProtKB-SubCell"/>
</dbReference>
<dbReference type="GO" id="GO:0031154">
    <property type="term" value="P:culmination involved in sorocarp development"/>
    <property type="evidence" value="ECO:0000315"/>
    <property type="project" value="dictyBase"/>
</dbReference>
<dbReference type="CDD" id="cd22271">
    <property type="entry name" value="DPBB_EXP_N-like"/>
    <property type="match status" value="1"/>
</dbReference>
<dbReference type="FunFam" id="2.60.40.760:FF:000006">
    <property type="entry name" value="Expansin-like protein 3"/>
    <property type="match status" value="1"/>
</dbReference>
<dbReference type="Gene3D" id="2.60.40.760">
    <property type="entry name" value="Expansin, cellulose-binding-like domain"/>
    <property type="match status" value="1"/>
</dbReference>
<dbReference type="Gene3D" id="2.60.120.260">
    <property type="entry name" value="Galactose-binding domain-like"/>
    <property type="match status" value="1"/>
</dbReference>
<dbReference type="Gene3D" id="2.40.40.10">
    <property type="entry name" value="RlpA-like domain"/>
    <property type="match status" value="1"/>
</dbReference>
<dbReference type="InterPro" id="IPR007112">
    <property type="entry name" value="Expansin/allergen_DPBB_dom"/>
</dbReference>
<dbReference type="InterPro" id="IPR036749">
    <property type="entry name" value="Expansin_CBD_sf"/>
</dbReference>
<dbReference type="InterPro" id="IPR051477">
    <property type="entry name" value="Expansin_CellWall"/>
</dbReference>
<dbReference type="InterPro" id="IPR008979">
    <property type="entry name" value="Galactose-bd-like_sf"/>
</dbReference>
<dbReference type="InterPro" id="IPR036908">
    <property type="entry name" value="RlpA-like_sf"/>
</dbReference>
<dbReference type="PANTHER" id="PTHR31836">
    <property type="match status" value="1"/>
</dbReference>
<dbReference type="PANTHER" id="PTHR31836:SF21">
    <property type="entry name" value="EXPANSIN-LIKE PROTEIN 7"/>
    <property type="match status" value="1"/>
</dbReference>
<dbReference type="SUPFAM" id="SSF50685">
    <property type="entry name" value="Barwin-like endoglucanases"/>
    <property type="match status" value="1"/>
</dbReference>
<dbReference type="SUPFAM" id="SSF49785">
    <property type="entry name" value="Galactose-binding domain-like"/>
    <property type="match status" value="1"/>
</dbReference>
<dbReference type="PROSITE" id="PS50842">
    <property type="entry name" value="EXPANSIN_EG45"/>
    <property type="match status" value="1"/>
</dbReference>
<protein>
    <recommendedName>
        <fullName>Expansin-like protein 7</fullName>
        <shortName>Ddexpl7</shortName>
    </recommendedName>
</protein>
<name>EXPL7_DICDI</name>
<evidence type="ECO:0000250" key="1"/>
<evidence type="ECO:0000255" key="2"/>
<evidence type="ECO:0000255" key="3">
    <source>
        <dbReference type="PROSITE-ProRule" id="PRU00079"/>
    </source>
</evidence>
<evidence type="ECO:0000256" key="4">
    <source>
        <dbReference type="SAM" id="MobiDB-lite"/>
    </source>
</evidence>
<evidence type="ECO:0000269" key="5">
    <source>
    </source>
</evidence>
<evidence type="ECO:0000305" key="6"/>
<reference key="1">
    <citation type="journal article" date="2005" name="Nature">
        <title>The genome of the social amoeba Dictyostelium discoideum.</title>
        <authorList>
            <person name="Eichinger L."/>
            <person name="Pachebat J.A."/>
            <person name="Gloeckner G."/>
            <person name="Rajandream M.A."/>
            <person name="Sucgang R."/>
            <person name="Berriman M."/>
            <person name="Song J."/>
            <person name="Olsen R."/>
            <person name="Szafranski K."/>
            <person name="Xu Q."/>
            <person name="Tunggal B."/>
            <person name="Kummerfeld S."/>
            <person name="Madera M."/>
            <person name="Konfortov B.A."/>
            <person name="Rivero F."/>
            <person name="Bankier A.T."/>
            <person name="Lehmann R."/>
            <person name="Hamlin N."/>
            <person name="Davies R."/>
            <person name="Gaudet P."/>
            <person name="Fey P."/>
            <person name="Pilcher K."/>
            <person name="Chen G."/>
            <person name="Saunders D."/>
            <person name="Sodergren E.J."/>
            <person name="Davis P."/>
            <person name="Kerhornou A."/>
            <person name="Nie X."/>
            <person name="Hall N."/>
            <person name="Anjard C."/>
            <person name="Hemphill L."/>
            <person name="Bason N."/>
            <person name="Farbrother P."/>
            <person name="Desany B."/>
            <person name="Just E."/>
            <person name="Morio T."/>
            <person name="Rost R."/>
            <person name="Churcher C.M."/>
            <person name="Cooper J."/>
            <person name="Haydock S."/>
            <person name="van Driessche N."/>
            <person name="Cronin A."/>
            <person name="Goodhead I."/>
            <person name="Muzny D.M."/>
            <person name="Mourier T."/>
            <person name="Pain A."/>
            <person name="Lu M."/>
            <person name="Harper D."/>
            <person name="Lindsay R."/>
            <person name="Hauser H."/>
            <person name="James K.D."/>
            <person name="Quiles M."/>
            <person name="Madan Babu M."/>
            <person name="Saito T."/>
            <person name="Buchrieser C."/>
            <person name="Wardroper A."/>
            <person name="Felder M."/>
            <person name="Thangavelu M."/>
            <person name="Johnson D."/>
            <person name="Knights A."/>
            <person name="Loulseged H."/>
            <person name="Mungall K.L."/>
            <person name="Oliver K."/>
            <person name="Price C."/>
            <person name="Quail M.A."/>
            <person name="Urushihara H."/>
            <person name="Hernandez J."/>
            <person name="Rabbinowitsch E."/>
            <person name="Steffen D."/>
            <person name="Sanders M."/>
            <person name="Ma J."/>
            <person name="Kohara Y."/>
            <person name="Sharp S."/>
            <person name="Simmonds M.N."/>
            <person name="Spiegler S."/>
            <person name="Tivey A."/>
            <person name="Sugano S."/>
            <person name="White B."/>
            <person name="Walker D."/>
            <person name="Woodward J.R."/>
            <person name="Winckler T."/>
            <person name="Tanaka Y."/>
            <person name="Shaulsky G."/>
            <person name="Schleicher M."/>
            <person name="Weinstock G.M."/>
            <person name="Rosenthal A."/>
            <person name="Cox E.C."/>
            <person name="Chisholm R.L."/>
            <person name="Gibbs R.A."/>
            <person name="Loomis W.F."/>
            <person name="Platzer M."/>
            <person name="Kay R.R."/>
            <person name="Williams J.G."/>
            <person name="Dear P.H."/>
            <person name="Noegel A.A."/>
            <person name="Barrell B.G."/>
            <person name="Kuspa A."/>
        </authorList>
    </citation>
    <scope>NUCLEOTIDE SEQUENCE [LARGE SCALE GENOMIC DNA]</scope>
    <source>
        <strain>AX4</strain>
    </source>
</reference>
<reference key="2">
    <citation type="journal article" date="2003" name="Eukaryot. Cell">
        <title>Changing patterns of gene expression in Dictyostelium prestalk cell subtypes recognized by in situ hybridization with genes from microarray analyses.</title>
        <authorList>
            <person name="Maeda M."/>
            <person name="Sakamoto H."/>
            <person name="Iranfar N."/>
            <person name="Fuller D."/>
            <person name="Maruo T."/>
            <person name="Ogihara S."/>
            <person name="Morio T."/>
            <person name="Urushihara H."/>
            <person name="Tanaka Y."/>
            <person name="Loomis W.F."/>
        </authorList>
    </citation>
    <scope>IDENTIFICATION</scope>
</reference>
<reference key="3">
    <citation type="journal article" date="2004" name="Eukaryot. Cell">
        <title>Control of cell type proportioning in Dictyostelium discoideum by differentiation-inducing factor as determined by in situ hybridization.</title>
        <authorList>
            <person name="Maruo T."/>
            <person name="Sakamoto H."/>
            <person name="Iranfar N."/>
            <person name="Fuller D."/>
            <person name="Morio T."/>
            <person name="Urushihara H."/>
            <person name="Tanaka Y."/>
            <person name="Maeda M."/>
            <person name="Loomis W.F."/>
        </authorList>
    </citation>
    <scope>IDENTIFICATION</scope>
</reference>
<reference key="4">
    <citation type="journal article" date="2004" name="Int. J. Dev. Biol.">
        <title>Identification of new modes of Dd-STATa regulation of gene expression in Dictyostelium by in situ hybridisation.</title>
        <authorList>
            <person name="Shimada N."/>
            <person name="Maeda M."/>
            <person name="Urushihara H."/>
            <person name="Kawata T."/>
        </authorList>
    </citation>
    <scope>IDENTIFICATION</scope>
</reference>
<reference key="5">
    <citation type="journal article" date="2009" name="Dev. Growth Differ.">
        <title>Role of an expansin-like molecule in Dictyostelium morphogenesis and regulation of its gene expression by the signal transducer and activator of transcription protein Dd-STATa.</title>
        <authorList>
            <person name="Ogasawara S."/>
            <person name="Shimada N."/>
            <person name="Kawata T."/>
        </authorList>
    </citation>
    <scope>IDENTIFICATION</scope>
    <scope>DISRUPTION PHENOTYPE</scope>
    <scope>DEVELOPMENTAL STAGE</scope>
</reference>